<reference key="1">
    <citation type="journal article" date="2009" name="Genome Biol.">
        <title>Genomic and genetic analyses of diversity and plant interactions of Pseudomonas fluorescens.</title>
        <authorList>
            <person name="Silby M.W."/>
            <person name="Cerdeno-Tarraga A.M."/>
            <person name="Vernikos G.S."/>
            <person name="Giddens S.R."/>
            <person name="Jackson R.W."/>
            <person name="Preston G.M."/>
            <person name="Zhang X.-X."/>
            <person name="Moon C.D."/>
            <person name="Gehrig S.M."/>
            <person name="Godfrey S.A.C."/>
            <person name="Knight C.G."/>
            <person name="Malone J.G."/>
            <person name="Robinson Z."/>
            <person name="Spiers A.J."/>
            <person name="Harris S."/>
            <person name="Challis G.L."/>
            <person name="Yaxley A.M."/>
            <person name="Harris D."/>
            <person name="Seeger K."/>
            <person name="Murphy L."/>
            <person name="Rutter S."/>
            <person name="Squares R."/>
            <person name="Quail M.A."/>
            <person name="Saunders E."/>
            <person name="Mavromatis K."/>
            <person name="Brettin T.S."/>
            <person name="Bentley S.D."/>
            <person name="Hothersall J."/>
            <person name="Stephens E."/>
            <person name="Thomas C.M."/>
            <person name="Parkhill J."/>
            <person name="Levy S.B."/>
            <person name="Rainey P.B."/>
            <person name="Thomson N.R."/>
        </authorList>
    </citation>
    <scope>NUCLEOTIDE SEQUENCE [LARGE SCALE GENOMIC DNA]</scope>
    <source>
        <strain>SBW25</strain>
    </source>
</reference>
<reference key="2">
    <citation type="journal article" date="1973" name="J. Biol. Chem.">
        <title>Concerted feedback inhibition. Purification and some properties of aspartokinase from Pseudomonas fluorescens.</title>
        <authorList>
            <person name="Dungan S.M."/>
            <person name="Katta P."/>
        </authorList>
    </citation>
    <scope>FUNCTION</scope>
    <scope>CATALYTIC ACTIVITY</scope>
    <scope>ACTIVITY REGULATION</scope>
    <scope>SUBUNIT</scope>
    <source>
        <strain>P-14</strain>
    </source>
</reference>
<reference key="3">
    <citation type="journal article" date="1973" name="J. Biol. Chem.">
        <title>Concerted feedback inhibition. Modifier-induced oligomerization of the Pseudomonas fluorescens aspartokinase.</title>
        <authorList>
            <person name="Dungan S.M."/>
            <person name="Datta P."/>
        </authorList>
    </citation>
    <scope>FUNCTION</scope>
    <scope>CATALYTIC ACTIVITY</scope>
    <scope>ACTIVITY REGULATION</scope>
    <scope>SUBUNIT</scope>
    <source>
        <strain>P-14</strain>
    </source>
</reference>
<feature type="chain" id="PRO_0000428879" description="Aspartate kinase">
    <location>
        <begin position="1"/>
        <end position="413"/>
    </location>
</feature>
<feature type="domain" description="ACT 1" evidence="2">
    <location>
        <begin position="267"/>
        <end position="341"/>
    </location>
</feature>
<feature type="domain" description="ACT 2" evidence="2">
    <location>
        <begin position="347"/>
        <end position="413"/>
    </location>
</feature>
<dbReference type="EC" id="2.7.2.4" evidence="3 4"/>
<dbReference type="EMBL" id="AM181176">
    <property type="protein sequence ID" value="CAY51568.1"/>
    <property type="molecule type" value="Genomic_DNA"/>
</dbReference>
<dbReference type="RefSeq" id="WP_010208327.1">
    <property type="nucleotide sequence ID" value="NC_012660.1"/>
</dbReference>
<dbReference type="SMR" id="C3JXY0"/>
<dbReference type="STRING" id="294.SRM1_04222"/>
<dbReference type="eggNOG" id="COG0527">
    <property type="taxonomic scope" value="Bacteria"/>
</dbReference>
<dbReference type="HOGENOM" id="CLU_009116_3_2_6"/>
<dbReference type="OrthoDB" id="9799110at2"/>
<dbReference type="UniPathway" id="UPA00034">
    <property type="reaction ID" value="UER00015"/>
</dbReference>
<dbReference type="UniPathway" id="UPA00050">
    <property type="reaction ID" value="UER00461"/>
</dbReference>
<dbReference type="UniPathway" id="UPA00051">
    <property type="reaction ID" value="UER00462"/>
</dbReference>
<dbReference type="GO" id="GO:0005829">
    <property type="term" value="C:cytosol"/>
    <property type="evidence" value="ECO:0007669"/>
    <property type="project" value="TreeGrafter"/>
</dbReference>
<dbReference type="GO" id="GO:0004072">
    <property type="term" value="F:aspartate kinase activity"/>
    <property type="evidence" value="ECO:0000314"/>
    <property type="project" value="UniProtKB"/>
</dbReference>
<dbReference type="GO" id="GO:0005524">
    <property type="term" value="F:ATP binding"/>
    <property type="evidence" value="ECO:0007669"/>
    <property type="project" value="UniProtKB-KW"/>
</dbReference>
<dbReference type="GO" id="GO:0019877">
    <property type="term" value="P:diaminopimelate biosynthetic process"/>
    <property type="evidence" value="ECO:0007669"/>
    <property type="project" value="UniProtKB-KW"/>
</dbReference>
<dbReference type="GO" id="GO:0009090">
    <property type="term" value="P:homoserine biosynthetic process"/>
    <property type="evidence" value="ECO:0007669"/>
    <property type="project" value="TreeGrafter"/>
</dbReference>
<dbReference type="GO" id="GO:0009089">
    <property type="term" value="P:lysine biosynthetic process via diaminopimelate"/>
    <property type="evidence" value="ECO:0007669"/>
    <property type="project" value="UniProtKB-UniPathway"/>
</dbReference>
<dbReference type="GO" id="GO:0009086">
    <property type="term" value="P:methionine biosynthetic process"/>
    <property type="evidence" value="ECO:0007669"/>
    <property type="project" value="UniProtKB-KW"/>
</dbReference>
<dbReference type="GO" id="GO:0009088">
    <property type="term" value="P:threonine biosynthetic process"/>
    <property type="evidence" value="ECO:0007669"/>
    <property type="project" value="UniProtKB-UniPathway"/>
</dbReference>
<dbReference type="CDD" id="cd04261">
    <property type="entry name" value="AAK_AKii-LysC-BS"/>
    <property type="match status" value="1"/>
</dbReference>
<dbReference type="CDD" id="cd04923">
    <property type="entry name" value="ACT_AK-LysC-DapG-like_2"/>
    <property type="match status" value="1"/>
</dbReference>
<dbReference type="CDD" id="cd04913">
    <property type="entry name" value="ACT_AKii-LysC-BS-like_1"/>
    <property type="match status" value="1"/>
</dbReference>
<dbReference type="FunFam" id="3.30.2130.10:FF:000002">
    <property type="entry name" value="Aspartokinase"/>
    <property type="match status" value="1"/>
</dbReference>
<dbReference type="FunFam" id="3.40.1160.10:FF:000002">
    <property type="entry name" value="Aspartokinase"/>
    <property type="match status" value="1"/>
</dbReference>
<dbReference type="Gene3D" id="3.40.1160.10">
    <property type="entry name" value="Acetylglutamate kinase-like"/>
    <property type="match status" value="1"/>
</dbReference>
<dbReference type="Gene3D" id="3.30.2130.10">
    <property type="entry name" value="VC0802-like"/>
    <property type="match status" value="1"/>
</dbReference>
<dbReference type="InterPro" id="IPR036393">
    <property type="entry name" value="AceGlu_kinase-like_sf"/>
</dbReference>
<dbReference type="InterPro" id="IPR045865">
    <property type="entry name" value="ACT-like_dom_sf"/>
</dbReference>
<dbReference type="InterPro" id="IPR054352">
    <property type="entry name" value="ACT_Aspartokinase"/>
</dbReference>
<dbReference type="InterPro" id="IPR002912">
    <property type="entry name" value="ACT_dom"/>
</dbReference>
<dbReference type="InterPro" id="IPR041740">
    <property type="entry name" value="AKii-LysC-BS"/>
</dbReference>
<dbReference type="InterPro" id="IPR001048">
    <property type="entry name" value="Asp/Glu/Uridylate_kinase"/>
</dbReference>
<dbReference type="InterPro" id="IPR005260">
    <property type="entry name" value="Asp_kin_monofn"/>
</dbReference>
<dbReference type="InterPro" id="IPR001341">
    <property type="entry name" value="Asp_kinase"/>
</dbReference>
<dbReference type="InterPro" id="IPR018042">
    <property type="entry name" value="Aspartate_kinase_CS"/>
</dbReference>
<dbReference type="NCBIfam" id="TIGR00656">
    <property type="entry name" value="asp_kin_monofn"/>
    <property type="match status" value="1"/>
</dbReference>
<dbReference type="NCBIfam" id="TIGR00657">
    <property type="entry name" value="asp_kinases"/>
    <property type="match status" value="1"/>
</dbReference>
<dbReference type="NCBIfam" id="NF005154">
    <property type="entry name" value="PRK06635.1-2"/>
    <property type="match status" value="1"/>
</dbReference>
<dbReference type="NCBIfam" id="NF005155">
    <property type="entry name" value="PRK06635.1-4"/>
    <property type="match status" value="1"/>
</dbReference>
<dbReference type="PANTHER" id="PTHR21499">
    <property type="entry name" value="ASPARTATE KINASE"/>
    <property type="match status" value="1"/>
</dbReference>
<dbReference type="PANTHER" id="PTHR21499:SF3">
    <property type="entry name" value="ASPARTOKINASE"/>
    <property type="match status" value="1"/>
</dbReference>
<dbReference type="Pfam" id="PF00696">
    <property type="entry name" value="AA_kinase"/>
    <property type="match status" value="1"/>
</dbReference>
<dbReference type="Pfam" id="PF01842">
    <property type="entry name" value="ACT"/>
    <property type="match status" value="1"/>
</dbReference>
<dbReference type="Pfam" id="PF22468">
    <property type="entry name" value="ACT_9"/>
    <property type="match status" value="1"/>
</dbReference>
<dbReference type="PIRSF" id="PIRSF000726">
    <property type="entry name" value="Asp_kin"/>
    <property type="match status" value="1"/>
</dbReference>
<dbReference type="SUPFAM" id="SSF55021">
    <property type="entry name" value="ACT-like"/>
    <property type="match status" value="2"/>
</dbReference>
<dbReference type="SUPFAM" id="SSF53633">
    <property type="entry name" value="Carbamate kinase-like"/>
    <property type="match status" value="1"/>
</dbReference>
<dbReference type="PROSITE" id="PS51671">
    <property type="entry name" value="ACT"/>
    <property type="match status" value="2"/>
</dbReference>
<dbReference type="PROSITE" id="PS00324">
    <property type="entry name" value="ASPARTOKINASE"/>
    <property type="match status" value="1"/>
</dbReference>
<keyword id="KW-0021">Allosteric enzyme</keyword>
<keyword id="KW-0028">Amino-acid biosynthesis</keyword>
<keyword id="KW-0067">ATP-binding</keyword>
<keyword id="KW-0963">Cytoplasm</keyword>
<keyword id="KW-0220">Diaminopimelate biosynthesis</keyword>
<keyword id="KW-0418">Kinase</keyword>
<keyword id="KW-0457">Lysine biosynthesis</keyword>
<keyword id="KW-0486">Methionine biosynthesis</keyword>
<keyword id="KW-0547">Nucleotide-binding</keyword>
<keyword id="KW-0677">Repeat</keyword>
<keyword id="KW-0791">Threonine biosynthesis</keyword>
<keyword id="KW-0808">Transferase</keyword>
<comment type="function">
    <text evidence="3 4">Involved in the biosynthesis of L-aspartate-beta-semialdehyde which is a central intermediate in the biosynthesis of different amino acids (L-lysine, L-methionine, L-threonine). Catalyzes the phosphorylation of the beta-carboxyl group of L-aspartate to yield 4-phospho-L-aspartate.</text>
</comment>
<comment type="catalytic activity">
    <reaction evidence="3 4">
        <text>L-aspartate + ATP = 4-phospho-L-aspartate + ADP</text>
        <dbReference type="Rhea" id="RHEA:23776"/>
        <dbReference type="ChEBI" id="CHEBI:29991"/>
        <dbReference type="ChEBI" id="CHEBI:30616"/>
        <dbReference type="ChEBI" id="CHEBI:57535"/>
        <dbReference type="ChEBI" id="CHEBI:456216"/>
        <dbReference type="EC" id="2.7.2.4"/>
    </reaction>
</comment>
<comment type="activity regulation">
    <text evidence="3 4">Activated by L-lysine, L-methionine, and L-isoleucine. L-threonine, at low concentrations, is a mild activator and has a weak inhibitory effect only at concentrations over 10 mM. Strongly feedback inhibited by the concerted combination of L-lysine and L-threonine and slightly feedback inhibited by the concerted combination of L-threonine and L-methionine. Activated by the combination of L-methionine and L-lysine, L-methionine and L-isoleucine and L-lysine and L-isoleucine.</text>
</comment>
<comment type="pathway">
    <text>Amino-acid biosynthesis; L-lysine biosynthesis via DAP pathway; (S)-tetrahydrodipicolinate from L-aspartate: step 1/4.</text>
</comment>
<comment type="pathway">
    <text>Amino-acid biosynthesis; L-methionine biosynthesis via de novo pathway; L-homoserine from L-aspartate: step 1/3.</text>
</comment>
<comment type="pathway">
    <text>Amino-acid biosynthesis; L-threonine biosynthesis; L-threonine from L-aspartate: step 1/5.</text>
</comment>
<comment type="subunit">
    <text evidence="4 7">Homotrimer (Probable). In the presence of inhibitory amino acids the Stokes radius of the protein increases, suggesting its oligomeric state may change (PubMed:4357741).</text>
</comment>
<comment type="subcellular location">
    <subcellularLocation>
        <location evidence="1">Cytoplasm</location>
    </subcellularLocation>
</comment>
<comment type="similarity">
    <text evidence="6">Belongs to the aspartokinase family.</text>
</comment>
<accession>C3JXY0</accession>
<proteinExistence type="evidence at protein level"/>
<evidence type="ECO:0000250" key="1"/>
<evidence type="ECO:0000255" key="2">
    <source>
        <dbReference type="PROSITE-ProRule" id="PRU01007"/>
    </source>
</evidence>
<evidence type="ECO:0000269" key="3">
    <source>
    </source>
</evidence>
<evidence type="ECO:0000269" key="4">
    <source>
    </source>
</evidence>
<evidence type="ECO:0000303" key="5">
    <source>
    </source>
</evidence>
<evidence type="ECO:0000305" key="6"/>
<evidence type="ECO:0000305" key="7">
    <source>
    </source>
</evidence>
<sequence>MALIVQKFGGTSVGSVERIEQVADKVKKFRDAGDDLVVVLSAMSGETNRLIDLAKAISGDQQPLPRELDVIVSTGEQVTIALLAMALNKRGVPAVSYTGSQVRILTDSAHTKARILQIDDQKIRTDLKAGRVVVVAGFQGVDEQGNITTLGRGGSDTTGVALAAALKADECQIYTDVDGVYTTDPRVVSVAQRLDKITFEEMLEMASLGSKVLQIRAVEFAGKYNVPLRVLHSFKEGPGTLITIDEEESMEQPIISGIAFNRDEAKLTIRGVPDTPGVAFKILGPISGANIEVDMIVQNVSHDNTTDFTFTVHRNEYDAAERILQNTAKEIGAREVVGDTKIAKVSIVGVGMRSHAGVASRMFEALAKESINIQMISTSEIKVSVVIEEKYLELAVRALHTAFELDAPARQGE</sequence>
<organism>
    <name type="scientific">Pseudomonas fluorescens (strain SBW25)</name>
    <dbReference type="NCBI Taxonomy" id="216595"/>
    <lineage>
        <taxon>Bacteria</taxon>
        <taxon>Pseudomonadati</taxon>
        <taxon>Pseudomonadota</taxon>
        <taxon>Gammaproteobacteria</taxon>
        <taxon>Pseudomonadales</taxon>
        <taxon>Pseudomonadaceae</taxon>
        <taxon>Pseudomonas</taxon>
    </lineage>
</organism>
<name>AK_PSEFS</name>
<protein>
    <recommendedName>
        <fullName>Aspartate kinase</fullName>
        <ecNumber evidence="3 4">2.7.2.4</ecNumber>
    </recommendedName>
    <alternativeName>
        <fullName evidence="5">Aspartokinase</fullName>
    </alternativeName>
</protein>
<gene>
    <name type="ordered locus">PFLU_4747</name>
</gene>